<organism>
    <name type="scientific">Mus musculus</name>
    <name type="common">Mouse</name>
    <dbReference type="NCBI Taxonomy" id="10090"/>
    <lineage>
        <taxon>Eukaryota</taxon>
        <taxon>Metazoa</taxon>
        <taxon>Chordata</taxon>
        <taxon>Craniata</taxon>
        <taxon>Vertebrata</taxon>
        <taxon>Euteleostomi</taxon>
        <taxon>Mammalia</taxon>
        <taxon>Eutheria</taxon>
        <taxon>Euarchontoglires</taxon>
        <taxon>Glires</taxon>
        <taxon>Rodentia</taxon>
        <taxon>Myomorpha</taxon>
        <taxon>Muroidea</taxon>
        <taxon>Muridae</taxon>
        <taxon>Murinae</taxon>
        <taxon>Mus</taxon>
        <taxon>Mus</taxon>
    </lineage>
</organism>
<evidence type="ECO:0000250" key="1">
    <source>
        <dbReference type="UniProtKB" id="O43309"/>
    </source>
</evidence>
<evidence type="ECO:0000255" key="2">
    <source>
        <dbReference type="PROSITE-ProRule" id="PRU00042"/>
    </source>
</evidence>
<evidence type="ECO:0000255" key="3">
    <source>
        <dbReference type="PROSITE-ProRule" id="PRU00187"/>
    </source>
</evidence>
<evidence type="ECO:0000256" key="4">
    <source>
        <dbReference type="SAM" id="MobiDB-lite"/>
    </source>
</evidence>
<evidence type="ECO:0000269" key="5">
    <source>
    </source>
</evidence>
<evidence type="ECO:0000305" key="6"/>
<sequence length="501" mass="57492">MTSTSDTKVCKNQGGLLEIKMEEECKYTTRQDRNLQKNTYNRDVFRKYFRQFCYQETSGPREALSRLRELCRQWLRPDLNSKEQILELLVLEQFLTILPGELQAWVQEQNPESVEEVVTVLEDLERELDELGYRASVQTEEQVTFQEVKPLATEQKPSVSLQFVKAKPGCELAGREAQEEQVSGVETGNEPRNVTLKQGLWEGTEAEQNPASRLAKDALECEEAHNPGEESSGISHEDSQPLRNENGVNSPANSEYAKHQSICPGRKVHGCDECGKSFTQHSRLIEHKRVHTGDRPYKCEVCGKTFRWRTVLIRHKVVHTGEKPYKCNECGRAFGQWSALNQHQRLHSGEKHYHCNECGKAFCQKAGLFHHLKSHRRNRPYQCLQCNKSFNRRSTLSQHQGVHTGAKPYECNDCGKAFVYNSSLATHQETHHKEKPFTQSGPIQQQRNHTKEKPYKCSVCGKAFIQKISLIEHEQIHTGERPYKCAEGGKAFIQMSELTEH</sequence>
<reference key="1">
    <citation type="journal article" date="2003" name="FEBS Lett.">
        <title>Three novel spermatogenesis-specific zinc finger genes.</title>
        <authorList>
            <person name="Weissig H."/>
            <person name="Narisawa S."/>
            <person name="Sikstrom C."/>
            <person name="Olsson P.G."/>
            <person name="McCarrey J.R."/>
            <person name="Tsonis P.A."/>
            <person name="Del Rio-Tsonis K."/>
            <person name="Millan J.L."/>
        </authorList>
    </citation>
    <scope>NUCLEOTIDE SEQUENCE [MRNA]</scope>
    <scope>TISSUE SPECIFICITY</scope>
</reference>
<reference key="2">
    <citation type="submission" date="2005-09" db="EMBL/GenBank/DDBJ databases">
        <authorList>
            <person name="Mural R.J."/>
            <person name="Adams M.D."/>
            <person name="Myers E.W."/>
            <person name="Smith H.O."/>
            <person name="Venter J.C."/>
        </authorList>
    </citation>
    <scope>NUCLEOTIDE SEQUENCE [LARGE SCALE GENOMIC DNA]</scope>
</reference>
<reference key="3">
    <citation type="journal article" date="2004" name="Genome Res.">
        <title>The status, quality, and expansion of the NIH full-length cDNA project: the Mammalian Gene Collection (MGC).</title>
        <authorList>
            <consortium name="The MGC Project Team"/>
        </authorList>
    </citation>
    <scope>NUCLEOTIDE SEQUENCE [LARGE SCALE MRNA]</scope>
    <source>
        <tissue>Eye</tissue>
    </source>
</reference>
<comment type="function">
    <text>May be involved in transcriptional regulation.</text>
</comment>
<comment type="subcellular location">
    <subcellularLocation>
        <location evidence="3">Nucleus</location>
    </subcellularLocation>
</comment>
<comment type="tissue specificity">
    <text evidence="5">Testis specific.</text>
</comment>
<comment type="similarity">
    <text evidence="6">Belongs to the krueppel C2H2-type zinc-finger protein family.</text>
</comment>
<accession>Q9Z1D7</accession>
<accession>Q8R0D8</accession>
<proteinExistence type="evidence at transcript level"/>
<protein>
    <recommendedName>
        <fullName>Zinc finger and SCAN domain-containing protein 12</fullName>
    </recommendedName>
    <alternativeName>
        <fullName>Zinc finger protein 96</fullName>
        <shortName>Zfp-96</shortName>
    </alternativeName>
</protein>
<feature type="chain" id="PRO_0000047404" description="Zinc finger and SCAN domain-containing protein 12">
    <location>
        <begin position="1"/>
        <end position="501"/>
    </location>
</feature>
<feature type="domain" description="SCAN box" evidence="3">
    <location>
        <begin position="51"/>
        <end position="132"/>
    </location>
</feature>
<feature type="zinc finger region" description="C2H2-type 1" evidence="2">
    <location>
        <begin position="269"/>
        <end position="291"/>
    </location>
</feature>
<feature type="zinc finger region" description="C2H2-type 2" evidence="2">
    <location>
        <begin position="297"/>
        <end position="319"/>
    </location>
</feature>
<feature type="zinc finger region" description="C2H2-type 3" evidence="2">
    <location>
        <begin position="325"/>
        <end position="347"/>
    </location>
</feature>
<feature type="zinc finger region" description="C2H2-type 4" evidence="2">
    <location>
        <begin position="353"/>
        <end position="375"/>
    </location>
</feature>
<feature type="zinc finger region" description="C2H2-type 5" evidence="2">
    <location>
        <begin position="381"/>
        <end position="403"/>
    </location>
</feature>
<feature type="zinc finger region" description="C2H2-type 6" evidence="2">
    <location>
        <begin position="409"/>
        <end position="431"/>
    </location>
</feature>
<feature type="zinc finger region" description="C2H2-type 7" evidence="2">
    <location>
        <begin position="455"/>
        <end position="477"/>
    </location>
</feature>
<feature type="zinc finger region" description="C2H2-type 8; degenerate" evidence="2">
    <location>
        <begin position="483"/>
        <end position="501"/>
    </location>
</feature>
<feature type="region of interest" description="Disordered" evidence="4">
    <location>
        <begin position="175"/>
        <end position="194"/>
    </location>
</feature>
<feature type="region of interest" description="Disordered" evidence="4">
    <location>
        <begin position="223"/>
        <end position="255"/>
    </location>
</feature>
<feature type="region of interest" description="Disordered" evidence="4">
    <location>
        <begin position="429"/>
        <end position="450"/>
    </location>
</feature>
<feature type="compositionally biased region" description="Polar residues" evidence="4">
    <location>
        <begin position="180"/>
        <end position="194"/>
    </location>
</feature>
<feature type="compositionally biased region" description="Polar residues" evidence="4">
    <location>
        <begin position="241"/>
        <end position="253"/>
    </location>
</feature>
<feature type="compositionally biased region" description="Polar residues" evidence="4">
    <location>
        <begin position="437"/>
        <end position="447"/>
    </location>
</feature>
<feature type="cross-link" description="Glycyl lysine isopeptide (Lys-Gly) (interchain with G-Cter in SUMO2)" evidence="1">
    <location>
        <position position="20"/>
    </location>
</feature>
<feature type="cross-link" description="Glycyl lysine isopeptide (Lys-Gly) (interchain with G-Cter in SUMO2)" evidence="1">
    <location>
        <position position="26"/>
    </location>
</feature>
<feature type="cross-link" description="Glycyl lysine isopeptide (Lys-Gly) (interchain with G-Cter in SUMO2)" evidence="1">
    <location>
        <position position="197"/>
    </location>
</feature>
<feature type="sequence conflict" description="In Ref. 1; AAD00104." evidence="6" ref="1">
    <original>L</original>
    <variation>V</variation>
    <location>
        <position position="67"/>
    </location>
</feature>
<feature type="sequence conflict" description="In Ref. 1; AAD00104." evidence="6" ref="1">
    <original>KP</original>
    <variation>NA</variation>
    <location>
        <begin position="149"/>
        <end position="150"/>
    </location>
</feature>
<dbReference type="EMBL" id="U62908">
    <property type="protein sequence ID" value="AAD00104.1"/>
    <property type="molecule type" value="mRNA"/>
</dbReference>
<dbReference type="EMBL" id="CH466561">
    <property type="protein sequence ID" value="EDL32662.1"/>
    <property type="molecule type" value="Genomic_DNA"/>
</dbReference>
<dbReference type="EMBL" id="CH466561">
    <property type="protein sequence ID" value="EDL32663.1"/>
    <property type="molecule type" value="Genomic_DNA"/>
</dbReference>
<dbReference type="EMBL" id="BC027041">
    <property type="protein sequence ID" value="AAH27041.1"/>
    <property type="molecule type" value="mRNA"/>
</dbReference>
<dbReference type="CCDS" id="CCDS26273.1"/>
<dbReference type="RefSeq" id="NP_057893.2">
    <property type="nucleotide sequence ID" value="NM_016684.3"/>
</dbReference>
<dbReference type="RefSeq" id="XP_006516723.1">
    <property type="nucleotide sequence ID" value="XM_006516660.3"/>
</dbReference>
<dbReference type="RefSeq" id="XP_030103106.1">
    <property type="nucleotide sequence ID" value="XM_030247246.2"/>
</dbReference>
<dbReference type="SMR" id="Q9Z1D7"/>
<dbReference type="BioGRID" id="204685">
    <property type="interactions" value="1"/>
</dbReference>
<dbReference type="IntAct" id="Q9Z1D7">
    <property type="interactions" value="1"/>
</dbReference>
<dbReference type="STRING" id="10090.ENSMUSP00000153548"/>
<dbReference type="iPTMnet" id="Q9Z1D7"/>
<dbReference type="PhosphoSitePlus" id="Q9Z1D7"/>
<dbReference type="PaxDb" id="10090-ENSMUSP00000058904"/>
<dbReference type="ProteomicsDB" id="275105"/>
<dbReference type="Antibodypedia" id="1809">
    <property type="antibodies" value="116 antibodies from 18 providers"/>
</dbReference>
<dbReference type="DNASU" id="22758"/>
<dbReference type="Ensembl" id="ENSMUST00000053293.14">
    <property type="protein sequence ID" value="ENSMUSP00000058904.7"/>
    <property type="gene ID" value="ENSMUSG00000036721.15"/>
</dbReference>
<dbReference type="Ensembl" id="ENSMUST00000099720.3">
    <property type="protein sequence ID" value="ENSMUSP00000097308.3"/>
    <property type="gene ID" value="ENSMUSG00000036721.15"/>
</dbReference>
<dbReference type="Ensembl" id="ENSMUST00000225545.2">
    <property type="protein sequence ID" value="ENSMUSP00000153548.2"/>
    <property type="gene ID" value="ENSMUSG00000036721.15"/>
</dbReference>
<dbReference type="GeneID" id="22758"/>
<dbReference type="KEGG" id="mmu:22758"/>
<dbReference type="UCSC" id="uc007pqd.1">
    <property type="organism name" value="mouse"/>
</dbReference>
<dbReference type="AGR" id="MGI:1099444"/>
<dbReference type="CTD" id="9753"/>
<dbReference type="MGI" id="MGI:1099444">
    <property type="gene designation" value="Zscan12"/>
</dbReference>
<dbReference type="VEuPathDB" id="HostDB:ENSMUSG00000036721"/>
<dbReference type="eggNOG" id="KOG1721">
    <property type="taxonomic scope" value="Eukaryota"/>
</dbReference>
<dbReference type="GeneTree" id="ENSGT00940000163105"/>
<dbReference type="HOGENOM" id="CLU_002678_49_3_1"/>
<dbReference type="InParanoid" id="Q9Z1D7"/>
<dbReference type="OMA" id="CHQCKEC"/>
<dbReference type="OrthoDB" id="6077919at2759"/>
<dbReference type="PhylomeDB" id="Q9Z1D7"/>
<dbReference type="TreeFam" id="TF338146"/>
<dbReference type="BioGRID-ORCS" id="22758">
    <property type="hits" value="1 hit in 76 CRISPR screens"/>
</dbReference>
<dbReference type="PRO" id="PR:Q9Z1D7"/>
<dbReference type="Proteomes" id="UP000000589">
    <property type="component" value="Chromosome 13"/>
</dbReference>
<dbReference type="RNAct" id="Q9Z1D7">
    <property type="molecule type" value="protein"/>
</dbReference>
<dbReference type="Bgee" id="ENSMUSG00000036721">
    <property type="expression patterns" value="Expressed in undifferentiated genital tubercle and 251 other cell types or tissues"/>
</dbReference>
<dbReference type="GO" id="GO:0005634">
    <property type="term" value="C:nucleus"/>
    <property type="evidence" value="ECO:0007669"/>
    <property type="project" value="UniProtKB-SubCell"/>
</dbReference>
<dbReference type="GO" id="GO:0003677">
    <property type="term" value="F:DNA binding"/>
    <property type="evidence" value="ECO:0007669"/>
    <property type="project" value="UniProtKB-KW"/>
</dbReference>
<dbReference type="GO" id="GO:0008270">
    <property type="term" value="F:zinc ion binding"/>
    <property type="evidence" value="ECO:0007669"/>
    <property type="project" value="UniProtKB-KW"/>
</dbReference>
<dbReference type="CDD" id="cd07936">
    <property type="entry name" value="SCAN"/>
    <property type="match status" value="1"/>
</dbReference>
<dbReference type="FunFam" id="3.30.160.60:FF:000005">
    <property type="entry name" value="Zinc finger protein 14 homolog"/>
    <property type="match status" value="1"/>
</dbReference>
<dbReference type="FunFam" id="3.30.160.60:FF:000144">
    <property type="entry name" value="zinc finger protein 181 isoform X1"/>
    <property type="match status" value="1"/>
</dbReference>
<dbReference type="FunFam" id="3.30.160.60:FF:000053">
    <property type="entry name" value="zinc finger protein 182 isoform X1"/>
    <property type="match status" value="1"/>
</dbReference>
<dbReference type="FunFam" id="3.30.160.60:FF:000247">
    <property type="entry name" value="Zinc finger protein 236"/>
    <property type="match status" value="1"/>
</dbReference>
<dbReference type="FunFam" id="3.30.160.60:FF:000358">
    <property type="entry name" value="zinc finger protein 24"/>
    <property type="match status" value="1"/>
</dbReference>
<dbReference type="FunFam" id="1.10.4020.10:FF:000001">
    <property type="entry name" value="zinc finger protein 263 isoform X1"/>
    <property type="match status" value="1"/>
</dbReference>
<dbReference type="FunFam" id="3.30.160.60:FF:002343">
    <property type="entry name" value="Zinc finger protein 33A"/>
    <property type="match status" value="1"/>
</dbReference>
<dbReference type="FunFam" id="3.30.160.60:FF:000016">
    <property type="entry name" value="zinc finger protein 37 homolog"/>
    <property type="match status" value="1"/>
</dbReference>
<dbReference type="Gene3D" id="3.30.160.60">
    <property type="entry name" value="Classic Zinc Finger"/>
    <property type="match status" value="8"/>
</dbReference>
<dbReference type="Gene3D" id="1.10.4020.10">
    <property type="entry name" value="DNA breaking-rejoining enzymes"/>
    <property type="match status" value="1"/>
</dbReference>
<dbReference type="InterPro" id="IPR003309">
    <property type="entry name" value="SCAN_dom"/>
</dbReference>
<dbReference type="InterPro" id="IPR038269">
    <property type="entry name" value="SCAN_sf"/>
</dbReference>
<dbReference type="InterPro" id="IPR036236">
    <property type="entry name" value="Znf_C2H2_sf"/>
</dbReference>
<dbReference type="InterPro" id="IPR013087">
    <property type="entry name" value="Znf_C2H2_type"/>
</dbReference>
<dbReference type="PANTHER" id="PTHR24393">
    <property type="entry name" value="ZINC FINGER PROTEIN"/>
    <property type="match status" value="1"/>
</dbReference>
<dbReference type="PANTHER" id="PTHR24393:SF100">
    <property type="entry name" value="ZINC FINGER PROTEIN-RELATED"/>
    <property type="match status" value="1"/>
</dbReference>
<dbReference type="Pfam" id="PF02023">
    <property type="entry name" value="SCAN"/>
    <property type="match status" value="1"/>
</dbReference>
<dbReference type="Pfam" id="PF00096">
    <property type="entry name" value="zf-C2H2"/>
    <property type="match status" value="6"/>
</dbReference>
<dbReference type="SMART" id="SM00431">
    <property type="entry name" value="SCAN"/>
    <property type="match status" value="1"/>
</dbReference>
<dbReference type="SMART" id="SM00355">
    <property type="entry name" value="ZnF_C2H2"/>
    <property type="match status" value="7"/>
</dbReference>
<dbReference type="SUPFAM" id="SSF57667">
    <property type="entry name" value="beta-beta-alpha zinc fingers"/>
    <property type="match status" value="4"/>
</dbReference>
<dbReference type="SUPFAM" id="SSF47353">
    <property type="entry name" value="Retrovirus capsid dimerization domain-like"/>
    <property type="match status" value="1"/>
</dbReference>
<dbReference type="PROSITE" id="PS50804">
    <property type="entry name" value="SCAN_BOX"/>
    <property type="match status" value="1"/>
</dbReference>
<dbReference type="PROSITE" id="PS00028">
    <property type="entry name" value="ZINC_FINGER_C2H2_1"/>
    <property type="match status" value="7"/>
</dbReference>
<dbReference type="PROSITE" id="PS50157">
    <property type="entry name" value="ZINC_FINGER_C2H2_2"/>
    <property type="match status" value="8"/>
</dbReference>
<gene>
    <name type="primary">Zscan12</name>
    <name type="synonym">Zfp96</name>
    <name type="synonym">Znf96</name>
</gene>
<name>ZSC12_MOUSE</name>
<keyword id="KW-0238">DNA-binding</keyword>
<keyword id="KW-1017">Isopeptide bond</keyword>
<keyword id="KW-0479">Metal-binding</keyword>
<keyword id="KW-0539">Nucleus</keyword>
<keyword id="KW-1185">Reference proteome</keyword>
<keyword id="KW-0677">Repeat</keyword>
<keyword id="KW-0804">Transcription</keyword>
<keyword id="KW-0805">Transcription regulation</keyword>
<keyword id="KW-0832">Ubl conjugation</keyword>
<keyword id="KW-0862">Zinc</keyword>
<keyword id="KW-0863">Zinc-finger</keyword>